<accession>P63906</accession>
<accession>Q8XFF8</accession>
<keyword id="KW-0378">Hydrolase</keyword>
<keyword id="KW-0546">Nucleotide metabolism</keyword>
<keyword id="KW-0547">Nucleotide-binding</keyword>
<protein>
    <recommendedName>
        <fullName evidence="1">dCTP deaminase</fullName>
        <ecNumber evidence="1">3.5.4.13</ecNumber>
    </recommendedName>
    <alternativeName>
        <fullName evidence="1">Deoxycytidine triphosphate deaminase</fullName>
    </alternativeName>
</protein>
<organism>
    <name type="scientific">Salmonella typhi</name>
    <dbReference type="NCBI Taxonomy" id="90370"/>
    <lineage>
        <taxon>Bacteria</taxon>
        <taxon>Pseudomonadati</taxon>
        <taxon>Pseudomonadota</taxon>
        <taxon>Gammaproteobacteria</taxon>
        <taxon>Enterobacterales</taxon>
        <taxon>Enterobacteriaceae</taxon>
        <taxon>Salmonella</taxon>
    </lineage>
</organism>
<gene>
    <name evidence="1" type="primary">dcd</name>
    <name type="ordered locus">STY2334</name>
    <name type="ordered locus">t0751</name>
</gene>
<dbReference type="EC" id="3.5.4.13" evidence="1"/>
<dbReference type="EMBL" id="AL513382">
    <property type="protein sequence ID" value="CAD02484.1"/>
    <property type="molecule type" value="Genomic_DNA"/>
</dbReference>
<dbReference type="EMBL" id="AE014613">
    <property type="protein sequence ID" value="AAO68444.1"/>
    <property type="molecule type" value="Genomic_DNA"/>
</dbReference>
<dbReference type="RefSeq" id="NP_456667.1">
    <property type="nucleotide sequence ID" value="NC_003198.1"/>
</dbReference>
<dbReference type="RefSeq" id="WP_001234783.1">
    <property type="nucleotide sequence ID" value="NZ_WSUR01000002.1"/>
</dbReference>
<dbReference type="SMR" id="P63906"/>
<dbReference type="STRING" id="220341.gene:17586239"/>
<dbReference type="KEGG" id="stt:t0751"/>
<dbReference type="KEGG" id="sty:STY2334"/>
<dbReference type="PATRIC" id="fig|220341.7.peg.2356"/>
<dbReference type="eggNOG" id="COG0717">
    <property type="taxonomic scope" value="Bacteria"/>
</dbReference>
<dbReference type="HOGENOM" id="CLU_087476_2_0_6"/>
<dbReference type="OMA" id="PVESMMW"/>
<dbReference type="OrthoDB" id="9780956at2"/>
<dbReference type="UniPathway" id="UPA00610">
    <property type="reaction ID" value="UER00665"/>
</dbReference>
<dbReference type="Proteomes" id="UP000000541">
    <property type="component" value="Chromosome"/>
</dbReference>
<dbReference type="Proteomes" id="UP000002670">
    <property type="component" value="Chromosome"/>
</dbReference>
<dbReference type="GO" id="GO:0008829">
    <property type="term" value="F:dCTP deaminase activity"/>
    <property type="evidence" value="ECO:0007669"/>
    <property type="project" value="UniProtKB-UniRule"/>
</dbReference>
<dbReference type="GO" id="GO:0000166">
    <property type="term" value="F:nucleotide binding"/>
    <property type="evidence" value="ECO:0007669"/>
    <property type="project" value="UniProtKB-KW"/>
</dbReference>
<dbReference type="GO" id="GO:0006226">
    <property type="term" value="P:dUMP biosynthetic process"/>
    <property type="evidence" value="ECO:0007669"/>
    <property type="project" value="UniProtKB-UniPathway"/>
</dbReference>
<dbReference type="GO" id="GO:0006229">
    <property type="term" value="P:dUTP biosynthetic process"/>
    <property type="evidence" value="ECO:0007669"/>
    <property type="project" value="UniProtKB-UniRule"/>
</dbReference>
<dbReference type="GO" id="GO:0015949">
    <property type="term" value="P:nucleobase-containing small molecule interconversion"/>
    <property type="evidence" value="ECO:0007669"/>
    <property type="project" value="TreeGrafter"/>
</dbReference>
<dbReference type="CDD" id="cd07557">
    <property type="entry name" value="trimeric_dUTPase"/>
    <property type="match status" value="1"/>
</dbReference>
<dbReference type="FunFam" id="2.70.40.10:FF:000003">
    <property type="entry name" value="dCTP deaminase"/>
    <property type="match status" value="1"/>
</dbReference>
<dbReference type="Gene3D" id="2.70.40.10">
    <property type="match status" value="1"/>
</dbReference>
<dbReference type="HAMAP" id="MF_00146">
    <property type="entry name" value="dCTP_deaminase"/>
    <property type="match status" value="1"/>
</dbReference>
<dbReference type="InterPro" id="IPR011962">
    <property type="entry name" value="dCTP_deaminase"/>
</dbReference>
<dbReference type="InterPro" id="IPR036157">
    <property type="entry name" value="dUTPase-like_sf"/>
</dbReference>
<dbReference type="InterPro" id="IPR033704">
    <property type="entry name" value="dUTPase_trimeric"/>
</dbReference>
<dbReference type="NCBIfam" id="TIGR02274">
    <property type="entry name" value="dCTP_deam"/>
    <property type="match status" value="1"/>
</dbReference>
<dbReference type="PANTHER" id="PTHR42680">
    <property type="entry name" value="DCTP DEAMINASE"/>
    <property type="match status" value="1"/>
</dbReference>
<dbReference type="PANTHER" id="PTHR42680:SF3">
    <property type="entry name" value="DCTP DEAMINASE"/>
    <property type="match status" value="1"/>
</dbReference>
<dbReference type="Pfam" id="PF22769">
    <property type="entry name" value="DCD"/>
    <property type="match status" value="1"/>
</dbReference>
<dbReference type="SUPFAM" id="SSF51283">
    <property type="entry name" value="dUTPase-like"/>
    <property type="match status" value="1"/>
</dbReference>
<comment type="function">
    <text evidence="1">Catalyzes the deamination of dCTP to dUTP.</text>
</comment>
<comment type="catalytic activity">
    <reaction evidence="1">
        <text>dCTP + H2O + H(+) = dUTP + NH4(+)</text>
        <dbReference type="Rhea" id="RHEA:22680"/>
        <dbReference type="ChEBI" id="CHEBI:15377"/>
        <dbReference type="ChEBI" id="CHEBI:15378"/>
        <dbReference type="ChEBI" id="CHEBI:28938"/>
        <dbReference type="ChEBI" id="CHEBI:61481"/>
        <dbReference type="ChEBI" id="CHEBI:61555"/>
        <dbReference type="EC" id="3.5.4.13"/>
    </reaction>
</comment>
<comment type="pathway">
    <text evidence="1">Pyrimidine metabolism; dUMP biosynthesis; dUMP from dCTP (dUTP route): step 1/2.</text>
</comment>
<comment type="subunit">
    <text evidence="1">Homotrimer.</text>
</comment>
<comment type="similarity">
    <text evidence="1">Belongs to the dCTP deaminase family.</text>
</comment>
<name>DCD_SALTI</name>
<feature type="chain" id="PRO_0000156011" description="dCTP deaminase">
    <location>
        <begin position="1"/>
        <end position="193"/>
    </location>
</feature>
<feature type="region of interest" description="Disordered" evidence="2">
    <location>
        <begin position="169"/>
        <end position="193"/>
    </location>
</feature>
<feature type="active site" description="Proton donor/acceptor" evidence="1">
    <location>
        <position position="138"/>
    </location>
</feature>
<feature type="binding site" evidence="1">
    <location>
        <begin position="110"/>
        <end position="115"/>
    </location>
    <ligand>
        <name>dCTP</name>
        <dbReference type="ChEBI" id="CHEBI:61481"/>
    </ligand>
</feature>
<feature type="binding site" evidence="1">
    <location>
        <position position="128"/>
    </location>
    <ligand>
        <name>dCTP</name>
        <dbReference type="ChEBI" id="CHEBI:61481"/>
    </ligand>
</feature>
<feature type="binding site" evidence="1">
    <location>
        <begin position="136"/>
        <end position="138"/>
    </location>
    <ligand>
        <name>dCTP</name>
        <dbReference type="ChEBI" id="CHEBI:61481"/>
    </ligand>
</feature>
<feature type="binding site" evidence="1">
    <location>
        <position position="171"/>
    </location>
    <ligand>
        <name>dCTP</name>
        <dbReference type="ChEBI" id="CHEBI:61481"/>
    </ligand>
</feature>
<feature type="binding site" evidence="1">
    <location>
        <position position="178"/>
    </location>
    <ligand>
        <name>dCTP</name>
        <dbReference type="ChEBI" id="CHEBI:61481"/>
    </ligand>
</feature>
<feature type="binding site" evidence="1">
    <location>
        <position position="182"/>
    </location>
    <ligand>
        <name>dCTP</name>
        <dbReference type="ChEBI" id="CHEBI:61481"/>
    </ligand>
</feature>
<evidence type="ECO:0000255" key="1">
    <source>
        <dbReference type="HAMAP-Rule" id="MF_00146"/>
    </source>
</evidence>
<evidence type="ECO:0000256" key="2">
    <source>
        <dbReference type="SAM" id="MobiDB-lite"/>
    </source>
</evidence>
<sequence>MRLCDRDIEAWLDEGRLSITPRPPVERINGATVDVRLGNKFRTFRGHTAAFIDLSGPKDEVSAALDRVMSDEIVLPDGEAFYLHPGELALAVTFESVTLPPDLVGWLDGRSSLARLGLMVHVTAHRIDPGWSGCIVLEFYNSGKLPLALRPGMLIGALSFEPLSGPAARPYNRRQDAKYRDQQGAVASRIDKD</sequence>
<proteinExistence type="inferred from homology"/>
<reference key="1">
    <citation type="journal article" date="2001" name="Nature">
        <title>Complete genome sequence of a multiple drug resistant Salmonella enterica serovar Typhi CT18.</title>
        <authorList>
            <person name="Parkhill J."/>
            <person name="Dougan G."/>
            <person name="James K.D."/>
            <person name="Thomson N.R."/>
            <person name="Pickard D."/>
            <person name="Wain J."/>
            <person name="Churcher C.M."/>
            <person name="Mungall K.L."/>
            <person name="Bentley S.D."/>
            <person name="Holden M.T.G."/>
            <person name="Sebaihia M."/>
            <person name="Baker S."/>
            <person name="Basham D."/>
            <person name="Brooks K."/>
            <person name="Chillingworth T."/>
            <person name="Connerton P."/>
            <person name="Cronin A."/>
            <person name="Davis P."/>
            <person name="Davies R.M."/>
            <person name="Dowd L."/>
            <person name="White N."/>
            <person name="Farrar J."/>
            <person name="Feltwell T."/>
            <person name="Hamlin N."/>
            <person name="Haque A."/>
            <person name="Hien T.T."/>
            <person name="Holroyd S."/>
            <person name="Jagels K."/>
            <person name="Krogh A."/>
            <person name="Larsen T.S."/>
            <person name="Leather S."/>
            <person name="Moule S."/>
            <person name="O'Gaora P."/>
            <person name="Parry C."/>
            <person name="Quail M.A."/>
            <person name="Rutherford K.M."/>
            <person name="Simmonds M."/>
            <person name="Skelton J."/>
            <person name="Stevens K."/>
            <person name="Whitehead S."/>
            <person name="Barrell B.G."/>
        </authorList>
    </citation>
    <scope>NUCLEOTIDE SEQUENCE [LARGE SCALE GENOMIC DNA]</scope>
    <source>
        <strain>CT18</strain>
    </source>
</reference>
<reference key="2">
    <citation type="journal article" date="2003" name="J. Bacteriol.">
        <title>Comparative genomics of Salmonella enterica serovar Typhi strains Ty2 and CT18.</title>
        <authorList>
            <person name="Deng W."/>
            <person name="Liou S.-R."/>
            <person name="Plunkett G. III"/>
            <person name="Mayhew G.F."/>
            <person name="Rose D.J."/>
            <person name="Burland V."/>
            <person name="Kodoyianni V."/>
            <person name="Schwartz D.C."/>
            <person name="Blattner F.R."/>
        </authorList>
    </citation>
    <scope>NUCLEOTIDE SEQUENCE [LARGE SCALE GENOMIC DNA]</scope>
    <source>
        <strain>ATCC 700931 / Ty2</strain>
    </source>
</reference>